<protein>
    <recommendedName>
        <fullName>Glucan 1,3-beta-glucosidase BGL2</fullName>
        <ecNumber>3.2.1.58</ecNumber>
    </recommendedName>
    <alternativeName>
        <fullName>Exo-1,3-beta-glucanase</fullName>
    </alternativeName>
</protein>
<proteinExistence type="evidence at protein level"/>
<keyword id="KW-0134">Cell wall</keyword>
<keyword id="KW-0961">Cell wall biogenesis/degradation</keyword>
<keyword id="KW-0963">Cytoplasm</keyword>
<keyword id="KW-0903">Direct protein sequencing</keyword>
<keyword id="KW-0325">Glycoprotein</keyword>
<keyword id="KW-0326">Glycosidase</keyword>
<keyword id="KW-0378">Hydrolase</keyword>
<keyword id="KW-1185">Reference proteome</keyword>
<keyword id="KW-0964">Secreted</keyword>
<keyword id="KW-0732">Signal</keyword>
<keyword id="KW-0843">Virulence</keyword>
<comment type="function">
    <text evidence="7 8 9">Cell wall glucan 1,3-beta-glucosidase involved in cell wall biosynthesis and virulence. Crucial for delivery of beta-1,3-glucan to the biofilm matrix and for accumulation of mature matrix biomass. Plays a role as a major antigen in human systemic candidiasis patients.</text>
</comment>
<comment type="catalytic activity">
    <reaction evidence="8">
        <text>Successive hydrolysis of beta-D-glucose units from the non-reducing ends of (1-&gt;3)-beta-D-glucans, releasing alpha-glucose.</text>
        <dbReference type="EC" id="3.2.1.58"/>
    </reaction>
</comment>
<comment type="subcellular location">
    <subcellularLocation>
        <location evidence="4">Secreted</location>
        <location evidence="4">Cell wall</location>
    </subcellularLocation>
    <subcellularLocation>
        <location evidence="4">Cytoplasm</location>
    </subcellularLocation>
    <text>Tightly bound to cell wall. A fraction of unprecessed protein is found in the cytoplasm.</text>
</comment>
<comment type="induction">
    <text evidence="3 4 5 6">Induced during biofilm formation and by fluconazole and micafungin. Expression is also regulated by RCK2.</text>
</comment>
<comment type="disruption phenotype">
    <text evidence="7 9">Exhibits diminished extracellular biofilm material, renders cells more dependent on chitin for wall integrity, and attenuates virulence in mice.</text>
</comment>
<comment type="similarity">
    <text evidence="10">Belongs to the glycosyl hydrolase 17 family.</text>
</comment>
<organism>
    <name type="scientific">Candida albicans (strain SC5314 / ATCC MYA-2876)</name>
    <name type="common">Yeast</name>
    <dbReference type="NCBI Taxonomy" id="237561"/>
    <lineage>
        <taxon>Eukaryota</taxon>
        <taxon>Fungi</taxon>
        <taxon>Dikarya</taxon>
        <taxon>Ascomycota</taxon>
        <taxon>Saccharomycotina</taxon>
        <taxon>Pichiomycetes</taxon>
        <taxon>Debaryomycetaceae</taxon>
        <taxon>Candida/Lodderomyces clade</taxon>
        <taxon>Candida</taxon>
    </lineage>
</organism>
<name>BGL2_CANAL</name>
<gene>
    <name type="primary">BGL2</name>
    <name type="synonym">BGL21</name>
    <name type="ordered locus">CAALFM_C402250CA</name>
    <name type="ORF">CaO19.12034</name>
    <name type="ORF">CaO19.4565</name>
</gene>
<feature type="signal peptide" evidence="4">
    <location>
        <begin position="1"/>
        <end position="18"/>
    </location>
</feature>
<feature type="chain" id="PRO_0000428632" description="Glucan 1,3-beta-glucosidase BGL2">
    <location>
        <begin position="19"/>
        <end position="308"/>
    </location>
</feature>
<feature type="active site" description="Proton donor" evidence="1">
    <location>
        <position position="119"/>
    </location>
</feature>
<feature type="active site" description="Nucleophile" evidence="1">
    <location>
        <position position="228"/>
    </location>
</feature>
<feature type="glycosylation site" description="N-linked (GlcNAc...) asparagine" evidence="2">
    <location>
        <position position="197"/>
    </location>
</feature>
<evidence type="ECO:0000250" key="1">
    <source>
        <dbReference type="UniProtKB" id="O22317"/>
    </source>
</evidence>
<evidence type="ECO:0000255" key="2"/>
<evidence type="ECO:0000269" key="3">
    <source>
    </source>
</evidence>
<evidence type="ECO:0000269" key="4">
    <source>
    </source>
</evidence>
<evidence type="ECO:0000269" key="5">
    <source>
    </source>
</evidence>
<evidence type="ECO:0000269" key="6">
    <source>
    </source>
</evidence>
<evidence type="ECO:0000269" key="7">
    <source>
    </source>
</evidence>
<evidence type="ECO:0000269" key="8">
    <source>
    </source>
</evidence>
<evidence type="ECO:0000269" key="9">
    <source>
    </source>
</evidence>
<evidence type="ECO:0000305" key="10"/>
<reference key="1">
    <citation type="journal article" date="2004" name="Proc. Natl. Acad. Sci. U.S.A.">
        <title>The diploid genome sequence of Candida albicans.</title>
        <authorList>
            <person name="Jones T."/>
            <person name="Federspiel N.A."/>
            <person name="Chibana H."/>
            <person name="Dungan J."/>
            <person name="Kalman S."/>
            <person name="Magee B.B."/>
            <person name="Newport G."/>
            <person name="Thorstenson Y.R."/>
            <person name="Agabian N."/>
            <person name="Magee P.T."/>
            <person name="Davis R.W."/>
            <person name="Scherer S."/>
        </authorList>
    </citation>
    <scope>NUCLEOTIDE SEQUENCE [LARGE SCALE GENOMIC DNA]</scope>
    <source>
        <strain>SC5314 / ATCC MYA-2876</strain>
    </source>
</reference>
<reference key="2">
    <citation type="journal article" date="2007" name="Genome Biol.">
        <title>Assembly of the Candida albicans genome into sixteen supercontigs aligned on the eight chromosomes.</title>
        <authorList>
            <person name="van het Hoog M."/>
            <person name="Rast T.J."/>
            <person name="Martchenko M."/>
            <person name="Grindle S."/>
            <person name="Dignard D."/>
            <person name="Hogues H."/>
            <person name="Cuomo C."/>
            <person name="Berriman M."/>
            <person name="Scherer S."/>
            <person name="Magee B.B."/>
            <person name="Whiteway M."/>
            <person name="Chibana H."/>
            <person name="Nantel A."/>
            <person name="Magee P.T."/>
        </authorList>
    </citation>
    <scope>GENOME REANNOTATION</scope>
    <source>
        <strain>SC5314 / ATCC MYA-2876</strain>
    </source>
</reference>
<reference key="3">
    <citation type="journal article" date="2013" name="Genome Biol.">
        <title>Assembly of a phased diploid Candida albicans genome facilitates allele-specific measurements and provides a simple model for repeat and indel structure.</title>
        <authorList>
            <person name="Muzzey D."/>
            <person name="Schwartz K."/>
            <person name="Weissman J.S."/>
            <person name="Sherlock G."/>
        </authorList>
    </citation>
    <scope>NUCLEOTIDE SEQUENCE [LARGE SCALE GENOMIC DNA]</scope>
    <scope>GENOME REANNOTATION</scope>
    <source>
        <strain>SC5314 / ATCC MYA-2876</strain>
    </source>
</reference>
<reference key="4">
    <citation type="journal article" date="2009" name="Int. J. Antimicrob. Agents">
        <title>Localisation of Bgl2p upon antifungal drug treatment in Candida albicans.</title>
        <authorList>
            <person name="Angiolella L."/>
            <person name="Vitali A."/>
            <person name="Stringaro A."/>
            <person name="Mignogna G."/>
            <person name="Maras B."/>
            <person name="Bonito M."/>
            <person name="Colone M."/>
            <person name="Palamara A.T."/>
            <person name="Cassone A."/>
        </authorList>
    </citation>
    <scope>PROTEIN SEQUENCE OF 19-26</scope>
    <scope>IDENTIFICATION BY MASS SPECTROMETRY</scope>
    <scope>SUBCELLULAR LOCATION</scope>
    <scope>INDUCTION</scope>
</reference>
<reference key="5">
    <citation type="journal article" date="1995" name="Eur. J. Biochem.">
        <title>Kinetics of beta-1,3 glucan interaction at the donor and acceptor sites of the fungal glucosyltransferase encoded by the BGL2 gene.</title>
        <authorList>
            <person name="Goldman R.C."/>
            <person name="Sullivan P.A."/>
            <person name="Zakula D."/>
            <person name="Capobianco J.O."/>
        </authorList>
    </citation>
    <scope>FUNCTION</scope>
    <scope>CATALYTIC ACTIVITY</scope>
</reference>
<reference key="6">
    <citation type="journal article" date="1997" name="Microbiology">
        <title>Phenotype in Candida albicans of a disruption of the BGL2 gene encoding a 1,3-beta-glucosyltransferase.</title>
        <authorList>
            <person name="Sarthy A.V."/>
            <person name="McGonigal T."/>
            <person name="Coen M."/>
            <person name="Frost D.J."/>
            <person name="Meulbroek J.A."/>
            <person name="Goldman R.C."/>
        </authorList>
    </citation>
    <scope>FUNCTION</scope>
    <scope>DISRUPTION PHENOTYPE</scope>
</reference>
<reference key="7">
    <citation type="journal article" date="1999" name="Electrophoresis">
        <title>Two-dimensional gel electrophoresis as analytical tool for identifying Candida albicans immunogenic proteins.</title>
        <authorList>
            <person name="Pitarch A."/>
            <person name="Pardo M."/>
            <person name="Jimenez A."/>
            <person name="Pla J."/>
            <person name="Gil C."/>
            <person name="Sanchez M."/>
            <person name="Nombela C."/>
        </authorList>
    </citation>
    <scope>IDENTIFICATION AS AN IMMUNOGENIC PROTEIN</scope>
</reference>
<reference key="8">
    <citation type="journal article" date="2005" name="J. Antimicrob. Chemother.">
        <title>Exposure of Candida albicans to antifungal agents affects expression of SAP2 and SAP9 secreted proteinase genes.</title>
        <authorList>
            <person name="Copping V.M.S."/>
            <person name="Barelle C.J."/>
            <person name="Hube B."/>
            <person name="Gow N.A.R."/>
            <person name="Brown A.J.P."/>
            <person name="Odds F.C."/>
        </authorList>
    </citation>
    <scope>INDUCTION</scope>
</reference>
<reference key="9">
    <citation type="journal article" date="2006" name="Mol. Cell. Proteomics">
        <title>Decoding serological response to Candida cell wall immunome into novel diagnostic, prognostic, and therapeutic candidates for systemic candidiasis by proteomic and bioinformatic analyses.</title>
        <authorList>
            <person name="Pitarch A."/>
            <person name="Jimenez A."/>
            <person name="Nombela C."/>
            <person name="Gil C."/>
        </authorList>
    </citation>
    <scope>IDENTIFICATION AS AN IMMUNOGENIC PROTEIN</scope>
</reference>
<reference key="10">
    <citation type="journal article" date="2008" name="J. Clin. Microbiol.">
        <title>Immunoglobulin G responses to a panel of Candida albicans antigens as accurate and early markers for the presence of systemic candidiasis.</title>
        <authorList>
            <person name="Clancy C.J."/>
            <person name="Nguyen M.L."/>
            <person name="Cheng S."/>
            <person name="Huang H."/>
            <person name="Fan G."/>
            <person name="Jaber R.A."/>
            <person name="Wingard J.R."/>
            <person name="Cline C."/>
            <person name="Nguyen M.H."/>
        </authorList>
    </citation>
    <scope>IDENTIFICATION AS AN IMMUNOGENIC PROTEIN</scope>
</reference>
<reference key="11">
    <citation type="journal article" date="2009" name="J. Infect. Dis.">
        <title>Time course global gene expression analysis of an in vivo Candida biofilm.</title>
        <authorList>
            <person name="Nett J.E."/>
            <person name="Lepak A.J."/>
            <person name="Marchillo K."/>
            <person name="Andes D.R."/>
        </authorList>
    </citation>
    <scope>INDUCTION</scope>
</reference>
<reference key="12">
    <citation type="journal article" date="2010" name="FEMS Yeast Res.">
        <title>The MAP kinase-activated protein kinase Rck2p regulates cellular responses to cell wall stresses, filamentation and virulence in the human fungal pathogen Candida albicans.</title>
        <authorList>
            <person name="Li X."/>
            <person name="Du W."/>
            <person name="Zhao J."/>
            <person name="Zhang L."/>
            <person name="Zhu Z."/>
            <person name="Jiang L."/>
        </authorList>
    </citation>
    <scope>INDUCTION</scope>
</reference>
<reference key="13">
    <citation type="journal article" date="2012" name="PLoS Pathog.">
        <title>A Candida biofilm-induced pathway for matrix glucan delivery: implications for drug resistance.</title>
        <authorList>
            <person name="Taff H.T."/>
            <person name="Nett J.E."/>
            <person name="Zarnowski R."/>
            <person name="Ross K.M."/>
            <person name="Sanchez H."/>
            <person name="Cain M.T."/>
            <person name="Hamaker J."/>
            <person name="Mitchell A.P."/>
            <person name="Andes D.R."/>
        </authorList>
    </citation>
    <scope>FUNCTION</scope>
    <scope>DISRUPTION PHENOTYPE</scope>
</reference>
<sequence length="308" mass="33670">MQIKFLTTLATVLTSVAAMGDLAFNLGVKNDDGTCKDVSTFEGDLDFLKSHSKIIKTYAVSDCNTLQNLGPAAEAEGFQIQLGIWPNDDAHFEAEKEALQNYLPKISVSTIKIFLVGSEALYREDLTASELASKINEIKDLVKGIKDKNGKSYSSVPVGTVDSWNVLVDGASKPAIDAADVVYSNSFSYWQKNSQANASYSLFDDVMQALQTLQTAKGSTDIEFWVGETGWPTDGSSYGDSVPSVENAADQWQKGICALRAWGINVAVYEAFDEAWKPDTSGTSSVEKHWGVWQSDKTLKYSIDCKFN</sequence>
<dbReference type="EC" id="3.2.1.58"/>
<dbReference type="EMBL" id="CP017626">
    <property type="protein sequence ID" value="AOW28996.1"/>
    <property type="molecule type" value="Genomic_DNA"/>
</dbReference>
<dbReference type="RefSeq" id="XP_722637.2">
    <property type="nucleotide sequence ID" value="XM_717544.2"/>
</dbReference>
<dbReference type="SMR" id="Q5AMT2"/>
<dbReference type="BioGRID" id="1218576">
    <property type="interactions" value="1"/>
</dbReference>
<dbReference type="FunCoup" id="Q5AMT2">
    <property type="interactions" value="471"/>
</dbReference>
<dbReference type="STRING" id="237561.Q5AMT2"/>
<dbReference type="GlyCosmos" id="Q5AMT2">
    <property type="glycosylation" value="1 site, No reported glycans"/>
</dbReference>
<dbReference type="EnsemblFungi" id="C4_02250C_A-T">
    <property type="protein sequence ID" value="C4_02250C_A-T-p1"/>
    <property type="gene ID" value="C4_02250C_A"/>
</dbReference>
<dbReference type="GeneID" id="3635691"/>
<dbReference type="KEGG" id="cal:CAALFM_C402250CA"/>
<dbReference type="CGD" id="CAL0000186956">
    <property type="gene designation" value="BGL2"/>
</dbReference>
<dbReference type="VEuPathDB" id="FungiDB:C4_02250C_A"/>
<dbReference type="eggNOG" id="ENOG502QQE6">
    <property type="taxonomic scope" value="Eukaryota"/>
</dbReference>
<dbReference type="HOGENOM" id="CLU_028820_2_0_1"/>
<dbReference type="InParanoid" id="Q5AMT2"/>
<dbReference type="OMA" id="EGICAMR"/>
<dbReference type="OrthoDB" id="1293114at2759"/>
<dbReference type="PRO" id="PR:Q5AMT2"/>
<dbReference type="Proteomes" id="UP000000559">
    <property type="component" value="Chromosome 4"/>
</dbReference>
<dbReference type="GO" id="GO:0009986">
    <property type="term" value="C:cell surface"/>
    <property type="evidence" value="ECO:0000314"/>
    <property type="project" value="CGD"/>
</dbReference>
<dbReference type="GO" id="GO:0005737">
    <property type="term" value="C:cytoplasm"/>
    <property type="evidence" value="ECO:0007669"/>
    <property type="project" value="UniProtKB-SubCell"/>
</dbReference>
<dbReference type="GO" id="GO:0005576">
    <property type="term" value="C:extracellular region"/>
    <property type="evidence" value="ECO:0000314"/>
    <property type="project" value="CGD"/>
</dbReference>
<dbReference type="GO" id="GO:1903561">
    <property type="term" value="C:extracellular vesicle"/>
    <property type="evidence" value="ECO:0000314"/>
    <property type="project" value="CGD"/>
</dbReference>
<dbReference type="GO" id="GO:0009277">
    <property type="term" value="C:fungal-type cell wall"/>
    <property type="evidence" value="ECO:0000314"/>
    <property type="project" value="CGD"/>
</dbReference>
<dbReference type="GO" id="GO:0030445">
    <property type="term" value="C:yeast-form cell wall"/>
    <property type="evidence" value="ECO:0000314"/>
    <property type="project" value="CGD"/>
</dbReference>
<dbReference type="GO" id="GO:0042124">
    <property type="term" value="F:1,3-beta-glucanosyltransferase activity"/>
    <property type="evidence" value="ECO:0000315"/>
    <property type="project" value="CGD"/>
</dbReference>
<dbReference type="GO" id="GO:0042973">
    <property type="term" value="F:glucan endo-1,3-beta-D-glucosidase activity"/>
    <property type="evidence" value="ECO:0000318"/>
    <property type="project" value="GO_Central"/>
</dbReference>
<dbReference type="GO" id="GO:0004338">
    <property type="term" value="F:glucan exo-1,3-beta-glucosidase activity"/>
    <property type="evidence" value="ECO:0007669"/>
    <property type="project" value="UniProtKB-EC"/>
</dbReference>
<dbReference type="GO" id="GO:0042123">
    <property type="term" value="F:glucanosyltransferase activity"/>
    <property type="evidence" value="ECO:0000314"/>
    <property type="project" value="CGD"/>
</dbReference>
<dbReference type="GO" id="GO:0044406">
    <property type="term" value="P:adhesion of symbiont to host"/>
    <property type="evidence" value="ECO:0000314"/>
    <property type="project" value="CGD"/>
</dbReference>
<dbReference type="GO" id="GO:0051701">
    <property type="term" value="P:biological process involved in interaction with host"/>
    <property type="evidence" value="ECO:0000315"/>
    <property type="project" value="CGD"/>
</dbReference>
<dbReference type="GO" id="GO:0005975">
    <property type="term" value="P:carbohydrate metabolic process"/>
    <property type="evidence" value="ECO:0007669"/>
    <property type="project" value="InterPro"/>
</dbReference>
<dbReference type="GO" id="GO:0071555">
    <property type="term" value="P:cell wall organization"/>
    <property type="evidence" value="ECO:0000318"/>
    <property type="project" value="GO_Central"/>
</dbReference>
<dbReference type="GO" id="GO:0031505">
    <property type="term" value="P:fungal-type cell wall organization"/>
    <property type="evidence" value="ECO:0000315"/>
    <property type="project" value="CGD"/>
</dbReference>
<dbReference type="GO" id="GO:0044407">
    <property type="term" value="P:single-species biofilm formation in or on host organism"/>
    <property type="evidence" value="ECO:0000315"/>
    <property type="project" value="CGD"/>
</dbReference>
<dbReference type="GO" id="GO:0044011">
    <property type="term" value="P:single-species biofilm formation on inanimate substrate"/>
    <property type="evidence" value="ECO:0000315"/>
    <property type="project" value="CGD"/>
</dbReference>
<dbReference type="FunFam" id="3.20.20.80:FF:000105">
    <property type="entry name" value="Glucan 1,3-beta-glucosidase"/>
    <property type="match status" value="1"/>
</dbReference>
<dbReference type="Gene3D" id="3.20.20.80">
    <property type="entry name" value="Glycosidases"/>
    <property type="match status" value="1"/>
</dbReference>
<dbReference type="InterPro" id="IPR050732">
    <property type="entry name" value="Beta-glucan_modifiers"/>
</dbReference>
<dbReference type="InterPro" id="IPR000490">
    <property type="entry name" value="Glyco_hydro_17"/>
</dbReference>
<dbReference type="InterPro" id="IPR017853">
    <property type="entry name" value="Glycoside_hydrolase_SF"/>
</dbReference>
<dbReference type="PANTHER" id="PTHR16631">
    <property type="entry name" value="GLUCAN 1,3-BETA-GLUCOSIDASE"/>
    <property type="match status" value="1"/>
</dbReference>
<dbReference type="PANTHER" id="PTHR16631:SF26">
    <property type="entry name" value="GLUCAN 1,3-BETA-GLUCOSIDASE"/>
    <property type="match status" value="1"/>
</dbReference>
<dbReference type="Pfam" id="PF00332">
    <property type="entry name" value="Glyco_hydro_17"/>
    <property type="match status" value="1"/>
</dbReference>
<dbReference type="SUPFAM" id="SSF51445">
    <property type="entry name" value="(Trans)glycosidases"/>
    <property type="match status" value="1"/>
</dbReference>
<dbReference type="PROSITE" id="PS00587">
    <property type="entry name" value="GLYCOSYL_HYDROL_F17"/>
    <property type="match status" value="1"/>
</dbReference>
<accession>Q5AMT2</accession>
<accession>A0A1D8PLI1</accession>